<organism>
    <name type="scientific">Roseiflexus castenholzii (strain DSM 13941 / HLO8)</name>
    <dbReference type="NCBI Taxonomy" id="383372"/>
    <lineage>
        <taxon>Bacteria</taxon>
        <taxon>Bacillati</taxon>
        <taxon>Chloroflexota</taxon>
        <taxon>Chloroflexia</taxon>
        <taxon>Chloroflexales</taxon>
        <taxon>Roseiflexineae</taxon>
        <taxon>Roseiflexaceae</taxon>
        <taxon>Roseiflexus</taxon>
    </lineage>
</organism>
<dbReference type="EMBL" id="CP000804">
    <property type="protein sequence ID" value="ABU60342.1"/>
    <property type="molecule type" value="Genomic_DNA"/>
</dbReference>
<dbReference type="RefSeq" id="WP_012122763.1">
    <property type="nucleotide sequence ID" value="NC_009767.1"/>
</dbReference>
<dbReference type="SMR" id="A7NRZ6"/>
<dbReference type="STRING" id="383372.Rcas_4318"/>
<dbReference type="KEGG" id="rca:Rcas_4318"/>
<dbReference type="eggNOG" id="COG0244">
    <property type="taxonomic scope" value="Bacteria"/>
</dbReference>
<dbReference type="HOGENOM" id="CLU_092227_1_2_0"/>
<dbReference type="OrthoDB" id="9808307at2"/>
<dbReference type="Proteomes" id="UP000000263">
    <property type="component" value="Chromosome"/>
</dbReference>
<dbReference type="GO" id="GO:0015934">
    <property type="term" value="C:large ribosomal subunit"/>
    <property type="evidence" value="ECO:0007669"/>
    <property type="project" value="InterPro"/>
</dbReference>
<dbReference type="GO" id="GO:0070180">
    <property type="term" value="F:large ribosomal subunit rRNA binding"/>
    <property type="evidence" value="ECO:0007669"/>
    <property type="project" value="UniProtKB-UniRule"/>
</dbReference>
<dbReference type="GO" id="GO:0003735">
    <property type="term" value="F:structural constituent of ribosome"/>
    <property type="evidence" value="ECO:0007669"/>
    <property type="project" value="InterPro"/>
</dbReference>
<dbReference type="GO" id="GO:0006412">
    <property type="term" value="P:translation"/>
    <property type="evidence" value="ECO:0007669"/>
    <property type="project" value="UniProtKB-UniRule"/>
</dbReference>
<dbReference type="CDD" id="cd05797">
    <property type="entry name" value="Ribosomal_L10"/>
    <property type="match status" value="1"/>
</dbReference>
<dbReference type="Gene3D" id="3.30.70.1730">
    <property type="match status" value="1"/>
</dbReference>
<dbReference type="Gene3D" id="6.10.250.290">
    <property type="match status" value="1"/>
</dbReference>
<dbReference type="HAMAP" id="MF_00362">
    <property type="entry name" value="Ribosomal_uL10"/>
    <property type="match status" value="1"/>
</dbReference>
<dbReference type="InterPro" id="IPR001790">
    <property type="entry name" value="Ribosomal_uL10"/>
</dbReference>
<dbReference type="InterPro" id="IPR043141">
    <property type="entry name" value="Ribosomal_uL10-like_sf"/>
</dbReference>
<dbReference type="InterPro" id="IPR022973">
    <property type="entry name" value="Ribosomal_uL10_bac"/>
</dbReference>
<dbReference type="InterPro" id="IPR047865">
    <property type="entry name" value="Ribosomal_uL10_bac_type"/>
</dbReference>
<dbReference type="InterPro" id="IPR002363">
    <property type="entry name" value="Ribosomal_uL10_CS_bac"/>
</dbReference>
<dbReference type="NCBIfam" id="NF000955">
    <property type="entry name" value="PRK00099.1-1"/>
    <property type="match status" value="1"/>
</dbReference>
<dbReference type="PANTHER" id="PTHR11560">
    <property type="entry name" value="39S RIBOSOMAL PROTEIN L10, MITOCHONDRIAL"/>
    <property type="match status" value="1"/>
</dbReference>
<dbReference type="Pfam" id="PF00466">
    <property type="entry name" value="Ribosomal_L10"/>
    <property type="match status" value="1"/>
</dbReference>
<dbReference type="SUPFAM" id="SSF160369">
    <property type="entry name" value="Ribosomal protein L10-like"/>
    <property type="match status" value="1"/>
</dbReference>
<dbReference type="PROSITE" id="PS01109">
    <property type="entry name" value="RIBOSOMAL_L10"/>
    <property type="match status" value="1"/>
</dbReference>
<gene>
    <name evidence="1" type="primary">rplJ</name>
    <name type="ordered locus">Rcas_4318</name>
</gene>
<proteinExistence type="inferred from homology"/>
<evidence type="ECO:0000255" key="1">
    <source>
        <dbReference type="HAMAP-Rule" id="MF_00362"/>
    </source>
</evidence>
<evidence type="ECO:0000305" key="2"/>
<reference key="1">
    <citation type="submission" date="2007-08" db="EMBL/GenBank/DDBJ databases">
        <title>Complete sequence of Roseiflexus castenholzii DSM 13941.</title>
        <authorList>
            <consortium name="US DOE Joint Genome Institute"/>
            <person name="Copeland A."/>
            <person name="Lucas S."/>
            <person name="Lapidus A."/>
            <person name="Barry K."/>
            <person name="Glavina del Rio T."/>
            <person name="Dalin E."/>
            <person name="Tice H."/>
            <person name="Pitluck S."/>
            <person name="Thompson L.S."/>
            <person name="Brettin T."/>
            <person name="Bruce D."/>
            <person name="Detter J.C."/>
            <person name="Han C."/>
            <person name="Tapia R."/>
            <person name="Schmutz J."/>
            <person name="Larimer F."/>
            <person name="Land M."/>
            <person name="Hauser L."/>
            <person name="Kyrpides N."/>
            <person name="Mikhailova N."/>
            <person name="Bryant D.A."/>
            <person name="Hanada S."/>
            <person name="Tsukatani Y."/>
            <person name="Richardson P."/>
        </authorList>
    </citation>
    <scope>NUCLEOTIDE SEQUENCE [LARGE SCALE GENOMIC DNA]</scope>
    <source>
        <strain>DSM 13941 / HLO8</strain>
    </source>
</reference>
<keyword id="KW-1185">Reference proteome</keyword>
<keyword id="KW-0687">Ribonucleoprotein</keyword>
<keyword id="KW-0689">Ribosomal protein</keyword>
<keyword id="KW-0694">RNA-binding</keyword>
<keyword id="KW-0699">rRNA-binding</keyword>
<protein>
    <recommendedName>
        <fullName evidence="1">Large ribosomal subunit protein uL10</fullName>
    </recommendedName>
    <alternativeName>
        <fullName evidence="2">50S ribosomal protein L10</fullName>
    </alternativeName>
</protein>
<sequence>MPTQRKIETVADLKQRLERMQVAVVADYRGLSVADMTDLRKKLRESGAEFVVAKNTLTRIAARETGHEAIEPLLEGPTALAFAYDDVPKFVRAINEFNRGPKKITVRGGLLGTTLLKENVLDVVATLPTKDEVRAQVLGGLAAPVTGLAGIIAAPVNDIVNLLDATSKSILYALQARVDQLQPSSTS</sequence>
<accession>A7NRZ6</accession>
<feature type="chain" id="PRO_1000079557" description="Large ribosomal subunit protein uL10">
    <location>
        <begin position="1"/>
        <end position="187"/>
    </location>
</feature>
<comment type="function">
    <text evidence="1">Forms part of the ribosomal stalk, playing a central role in the interaction of the ribosome with GTP-bound translation factors.</text>
</comment>
<comment type="subunit">
    <text evidence="1">Part of the ribosomal stalk of the 50S ribosomal subunit. The N-terminus interacts with L11 and the large rRNA to form the base of the stalk. The C-terminus forms an elongated spine to which L12 dimers bind in a sequential fashion forming a multimeric L10(L12)X complex.</text>
</comment>
<comment type="similarity">
    <text evidence="1">Belongs to the universal ribosomal protein uL10 family.</text>
</comment>
<name>RL10_ROSCS</name>